<name>FMT_XYLF2</name>
<gene>
    <name evidence="1" type="primary">fmt</name>
    <name type="ordered locus">XfasM23_1864</name>
</gene>
<organism>
    <name type="scientific">Xylella fastidiosa (strain M23)</name>
    <dbReference type="NCBI Taxonomy" id="405441"/>
    <lineage>
        <taxon>Bacteria</taxon>
        <taxon>Pseudomonadati</taxon>
        <taxon>Pseudomonadota</taxon>
        <taxon>Gammaproteobacteria</taxon>
        <taxon>Lysobacterales</taxon>
        <taxon>Lysobacteraceae</taxon>
        <taxon>Xylella</taxon>
    </lineage>
</organism>
<dbReference type="EC" id="2.1.2.9" evidence="1"/>
<dbReference type="EMBL" id="CP001011">
    <property type="protein sequence ID" value="ACB93264.1"/>
    <property type="molecule type" value="Genomic_DNA"/>
</dbReference>
<dbReference type="RefSeq" id="WP_004089641.1">
    <property type="nucleotide sequence ID" value="NC_010577.1"/>
</dbReference>
<dbReference type="SMR" id="B2I8S3"/>
<dbReference type="GeneID" id="93905609"/>
<dbReference type="KEGG" id="xfn:XfasM23_1864"/>
<dbReference type="HOGENOM" id="CLU_033347_1_2_6"/>
<dbReference type="Proteomes" id="UP000001698">
    <property type="component" value="Chromosome"/>
</dbReference>
<dbReference type="GO" id="GO:0005829">
    <property type="term" value="C:cytosol"/>
    <property type="evidence" value="ECO:0007669"/>
    <property type="project" value="TreeGrafter"/>
</dbReference>
<dbReference type="GO" id="GO:0004479">
    <property type="term" value="F:methionyl-tRNA formyltransferase activity"/>
    <property type="evidence" value="ECO:0007669"/>
    <property type="project" value="UniProtKB-UniRule"/>
</dbReference>
<dbReference type="CDD" id="cd08646">
    <property type="entry name" value="FMT_core_Met-tRNA-FMT_N"/>
    <property type="match status" value="1"/>
</dbReference>
<dbReference type="CDD" id="cd08704">
    <property type="entry name" value="Met_tRNA_FMT_C"/>
    <property type="match status" value="1"/>
</dbReference>
<dbReference type="Gene3D" id="3.10.25.10">
    <property type="entry name" value="Formyl transferase, C-terminal domain"/>
    <property type="match status" value="1"/>
</dbReference>
<dbReference type="Gene3D" id="3.40.50.170">
    <property type="entry name" value="Formyl transferase, N-terminal domain"/>
    <property type="match status" value="1"/>
</dbReference>
<dbReference type="HAMAP" id="MF_00182">
    <property type="entry name" value="Formyl_trans"/>
    <property type="match status" value="1"/>
</dbReference>
<dbReference type="InterPro" id="IPR005794">
    <property type="entry name" value="Fmt"/>
</dbReference>
<dbReference type="InterPro" id="IPR005793">
    <property type="entry name" value="Formyl_trans_C"/>
</dbReference>
<dbReference type="InterPro" id="IPR037022">
    <property type="entry name" value="Formyl_trans_C_sf"/>
</dbReference>
<dbReference type="InterPro" id="IPR002376">
    <property type="entry name" value="Formyl_transf_N"/>
</dbReference>
<dbReference type="InterPro" id="IPR036477">
    <property type="entry name" value="Formyl_transf_N_sf"/>
</dbReference>
<dbReference type="InterPro" id="IPR011034">
    <property type="entry name" value="Formyl_transferase-like_C_sf"/>
</dbReference>
<dbReference type="InterPro" id="IPR001555">
    <property type="entry name" value="GART_AS"/>
</dbReference>
<dbReference type="InterPro" id="IPR044135">
    <property type="entry name" value="Met-tRNA-FMT_C"/>
</dbReference>
<dbReference type="InterPro" id="IPR041711">
    <property type="entry name" value="Met-tRNA-FMT_N"/>
</dbReference>
<dbReference type="NCBIfam" id="TIGR00460">
    <property type="entry name" value="fmt"/>
    <property type="match status" value="1"/>
</dbReference>
<dbReference type="PANTHER" id="PTHR11138">
    <property type="entry name" value="METHIONYL-TRNA FORMYLTRANSFERASE"/>
    <property type="match status" value="1"/>
</dbReference>
<dbReference type="PANTHER" id="PTHR11138:SF5">
    <property type="entry name" value="METHIONYL-TRNA FORMYLTRANSFERASE, MITOCHONDRIAL"/>
    <property type="match status" value="1"/>
</dbReference>
<dbReference type="Pfam" id="PF02911">
    <property type="entry name" value="Formyl_trans_C"/>
    <property type="match status" value="1"/>
</dbReference>
<dbReference type="Pfam" id="PF00551">
    <property type="entry name" value="Formyl_trans_N"/>
    <property type="match status" value="1"/>
</dbReference>
<dbReference type="SUPFAM" id="SSF50486">
    <property type="entry name" value="FMT C-terminal domain-like"/>
    <property type="match status" value="1"/>
</dbReference>
<dbReference type="SUPFAM" id="SSF53328">
    <property type="entry name" value="Formyltransferase"/>
    <property type="match status" value="1"/>
</dbReference>
<dbReference type="PROSITE" id="PS00373">
    <property type="entry name" value="GART"/>
    <property type="match status" value="1"/>
</dbReference>
<protein>
    <recommendedName>
        <fullName evidence="1">Methionyl-tRNA formyltransferase</fullName>
        <ecNumber evidence="1">2.1.2.9</ecNumber>
    </recommendedName>
</protein>
<keyword id="KW-0648">Protein biosynthesis</keyword>
<keyword id="KW-0808">Transferase</keyword>
<comment type="function">
    <text evidence="1">Attaches a formyl group to the free amino group of methionyl-tRNA(fMet). The formyl group appears to play a dual role in the initiator identity of N-formylmethionyl-tRNA by promoting its recognition by IF2 and preventing the misappropriation of this tRNA by the elongation apparatus.</text>
</comment>
<comment type="catalytic activity">
    <reaction evidence="1">
        <text>L-methionyl-tRNA(fMet) + (6R)-10-formyltetrahydrofolate = N-formyl-L-methionyl-tRNA(fMet) + (6S)-5,6,7,8-tetrahydrofolate + H(+)</text>
        <dbReference type="Rhea" id="RHEA:24380"/>
        <dbReference type="Rhea" id="RHEA-COMP:9952"/>
        <dbReference type="Rhea" id="RHEA-COMP:9953"/>
        <dbReference type="ChEBI" id="CHEBI:15378"/>
        <dbReference type="ChEBI" id="CHEBI:57453"/>
        <dbReference type="ChEBI" id="CHEBI:78530"/>
        <dbReference type="ChEBI" id="CHEBI:78844"/>
        <dbReference type="ChEBI" id="CHEBI:195366"/>
        <dbReference type="EC" id="2.1.2.9"/>
    </reaction>
</comment>
<comment type="similarity">
    <text evidence="1">Belongs to the Fmt family.</text>
</comment>
<proteinExistence type="inferred from homology"/>
<reference key="1">
    <citation type="journal article" date="2010" name="J. Bacteriol.">
        <title>Whole genome sequences of two Xylella fastidiosa strains (M12 and M23) causing almond leaf scorch disease in California.</title>
        <authorList>
            <person name="Chen J."/>
            <person name="Xie G."/>
            <person name="Han S."/>
            <person name="Chertkov O."/>
            <person name="Sims D."/>
            <person name="Civerolo E.L."/>
        </authorList>
    </citation>
    <scope>NUCLEOTIDE SEQUENCE [LARGE SCALE GENOMIC DNA]</scope>
    <source>
        <strain>M23</strain>
    </source>
</reference>
<evidence type="ECO:0000255" key="1">
    <source>
        <dbReference type="HAMAP-Rule" id="MF_00182"/>
    </source>
</evidence>
<accession>B2I8S3</accession>
<feature type="chain" id="PRO_1000098462" description="Methionyl-tRNA formyltransferase">
    <location>
        <begin position="1"/>
        <end position="307"/>
    </location>
</feature>
<feature type="binding site" evidence="1">
    <location>
        <begin position="108"/>
        <end position="111"/>
    </location>
    <ligand>
        <name>(6S)-5,6,7,8-tetrahydrofolate</name>
        <dbReference type="ChEBI" id="CHEBI:57453"/>
    </ligand>
</feature>
<sequence>MRIVFAGTPDFAVPSLRSVTQRADVVAVYTQPDRPAGRGRELMPSPVKLEAVARGLPVYQPQTLRSPEVLEQLRALRPDLIVVVAYGVILPEAVLTIPDDGCWNVHASLLPRWRGAAPIQRAIEAGDTETGVCLMQMEAGLDTGPVLMSLKTPINAHETSGQLHDRLAEMGAQLLSDGLGLLRAGLRPVPQPQLAVGVTYAHKLGKVESRLDWEQPAERLACRVRAFQPWPVAEVVLSGERVRIHEALALDLDHSQPPGTVLAASKEGIDVACVQGALRLCRLQREGGKAITVADYLNARRDLQVRA</sequence>